<name>REV_HV1Z8</name>
<keyword id="KW-0014">AIDS</keyword>
<keyword id="KW-1035">Host cytoplasm</keyword>
<keyword id="KW-1048">Host nucleus</keyword>
<keyword id="KW-0945">Host-virus interaction</keyword>
<keyword id="KW-0488">Methylation</keyword>
<keyword id="KW-0509">mRNA transport</keyword>
<keyword id="KW-0597">Phosphoprotein</keyword>
<keyword id="KW-0694">RNA-binding</keyword>
<keyword id="KW-0813">Transport</keyword>
<evidence type="ECO:0000250" key="1"/>
<evidence type="ECO:0000256" key="2">
    <source>
        <dbReference type="SAM" id="MobiDB-lite"/>
    </source>
</evidence>
<organism>
    <name type="scientific">Human immunodeficiency virus type 1 group M subtype D (isolate Z84)</name>
    <name type="common">HIV-1</name>
    <dbReference type="NCBI Taxonomy" id="11681"/>
    <lineage>
        <taxon>Viruses</taxon>
        <taxon>Riboviria</taxon>
        <taxon>Pararnavirae</taxon>
        <taxon>Artverviricota</taxon>
        <taxon>Revtraviricetes</taxon>
        <taxon>Ortervirales</taxon>
        <taxon>Retroviridae</taxon>
        <taxon>Orthoretrovirinae</taxon>
        <taxon>Lentivirus</taxon>
        <taxon>Human immunodeficiency virus type 1</taxon>
    </lineage>
</organism>
<protein>
    <recommendedName>
        <fullName>Protein Rev</fullName>
    </recommendedName>
    <alternativeName>
        <fullName>ART/TRS</fullName>
    </alternativeName>
    <alternativeName>
        <fullName>Anti-repression transactivator</fullName>
    </alternativeName>
    <alternativeName>
        <fullName>Regulator of expression of viral proteins</fullName>
    </alternativeName>
</protein>
<gene>
    <name type="primary">rev</name>
</gene>
<proteinExistence type="inferred from homology"/>
<comment type="function">
    <text evidence="1">Escorts unspliced or incompletely spliced viral pre-mRNAs (late transcripts) out of the nucleus of infected cells. These pre-mRNAs carry a recognition sequence called Rev responsive element (RRE) located in the env gene, that is not present in fully spliced viral mRNAs (early transcripts). This function is essential since most viral proteins are translated from unspliced or partially spliced pre-mRNAs which cannot exit the nucleus by the pathway used by fully processed cellular mRNAs. Rev itself is translated from a fully spliced mRNA that readily exits the nucleus. Rev's nuclear localization signal (NLS) binds directly to KPNB1/Importin beta-1 without previous binding to KPNA1/Importin alpha-1. KPNB1 binds to the GDP bound form of RAN (Ran-GDP) and targets Rev to the nucleus. In the nucleus, the conversion from Ran-GDP to Ran-GTP dissociates Rev from KPNB1 and allows Rev's binding to the RRE in viral pre-mRNAs. Rev multimerization on the RRE via cooperative assembly exposes its nuclear export signal (NES) to the surface. Rev can then form a complex with XPO1/CRM1 and Ran-GTP, leading to nuclear export of the complex. Conversion from Ran-GTP to Ran-GDP mediates dissociation of the Rev/RRE/XPO1/RAN complex, so that Rev can return to the nucleus for a subsequent round of export. Beside KPNB1, also seems to interact with TNPO1/Transportin-1, RANBP5/IPO5 and IPO7/RANBP7 for nuclear import. The nucleoporin-like HRB/RIP is an essential cofactor that probably indirectly interacts with Rev to release HIV RNAs from the perinuclear region to the cytoplasm (By similarity).</text>
</comment>
<comment type="subunit">
    <text evidence="1">Homomultimer; when bound to the RRE. Multimeric assembly is essential for activity and may involve XPO1. Binds to human KPNB1, XPO1, TNPO1, RANBP5 and IPO7 (By similarity).</text>
</comment>
<comment type="subcellular location">
    <subcellularLocation>
        <location>Host nucleus</location>
        <location>Host nucleolus</location>
    </subcellularLocation>
    <subcellularLocation>
        <location>Host cytoplasm</location>
    </subcellularLocation>
    <text evidence="1">The presence of both nuclear import and nuclear export signals leads to continuous shuttling between the nucleus and cytoplasm.</text>
</comment>
<comment type="domain">
    <text evidence="1">The RNA-binding motif binds to the RRE, a 240 bp stem-and-loop structure present in incompletely spliced viral pre-mRNAs. This region also contains the NLS which mediates nuclear localization via KPNB1 binding and, when the N-terminal sequence is present, nucleolar targeting. These overlapping functions prevent Rev bound to RRE from undesirable return to the nucleus. When Rev binds the RRE, the NLS becomes masked while the NES remains accessible. The leucine-rich NES mediates binding to human XPO1 (By similarity).</text>
</comment>
<comment type="PTM">
    <text evidence="1">Phosphorylated by protein kinase CK2. Presence of, and maybe binding to the N-terminus of the regulatory beta subunit of CK2 is necessary for CK2-mediated Rev's phosphorylation (By similarity).</text>
</comment>
<comment type="PTM">
    <text evidence="1">Asymmetrically arginine dimethylated at one site by host PRMT6. Methylation impairs the RNA-binding activity and export of viral RNA from the nucleus to the cytoplasm (By similarity).</text>
</comment>
<comment type="miscellaneous">
    <text>The Z-84 isolate was taken from a 54 year-old Zairean male.</text>
</comment>
<comment type="miscellaneous">
    <text>HIV-1 lineages are divided in three main groups, M (for Major), O (for Outlier), and N (for New, or Non-M, Non-O). The vast majority of strains found worldwide belong to the group M. Group O seems to be endemic to and largely confined to Cameroon and neighboring countries in West Central Africa, where these viruses represent a small minority of HIV-1 strains. The group N is represented by a limited number of isolates from Cameroonian persons. The group M is further subdivided in 9 clades or subtypes (A to D, F to H, J and K).</text>
</comment>
<organismHost>
    <name type="scientific">Homo sapiens</name>
    <name type="common">Human</name>
    <dbReference type="NCBI Taxonomy" id="9606"/>
</organismHost>
<sequence length="90" mass="10031">PPPSPEGTRQARRNRRRRWRARQRQIHSISERILSTLLGRSPEPVPLQLPPLERLNLNCNEDCGTSGTQGVGSHQISVESPAVLDSGTEE</sequence>
<dbReference type="EMBL" id="J03653">
    <property type="protein sequence ID" value="AAA44686.1"/>
    <property type="molecule type" value="Genomic_RNA"/>
</dbReference>
<dbReference type="GO" id="GO:0030430">
    <property type="term" value="C:host cell cytoplasm"/>
    <property type="evidence" value="ECO:0007669"/>
    <property type="project" value="UniProtKB-SubCell"/>
</dbReference>
<dbReference type="GO" id="GO:0044196">
    <property type="term" value="C:host cell nucleolus"/>
    <property type="evidence" value="ECO:0007669"/>
    <property type="project" value="UniProtKB-SubCell"/>
</dbReference>
<dbReference type="GO" id="GO:0003700">
    <property type="term" value="F:DNA-binding transcription factor activity"/>
    <property type="evidence" value="ECO:0007669"/>
    <property type="project" value="InterPro"/>
</dbReference>
<dbReference type="GO" id="GO:0003723">
    <property type="term" value="F:RNA binding"/>
    <property type="evidence" value="ECO:0007669"/>
    <property type="project" value="UniProtKB-KW"/>
</dbReference>
<dbReference type="GO" id="GO:0051028">
    <property type="term" value="P:mRNA transport"/>
    <property type="evidence" value="ECO:0007669"/>
    <property type="project" value="UniProtKB-KW"/>
</dbReference>
<dbReference type="Gene3D" id="6.10.140.630">
    <property type="match status" value="1"/>
</dbReference>
<dbReference type="InterPro" id="IPR000625">
    <property type="entry name" value="REV_protein"/>
</dbReference>
<dbReference type="Pfam" id="PF00424">
    <property type="entry name" value="REV"/>
    <property type="match status" value="1"/>
</dbReference>
<feature type="chain" id="PRO_0000085256" description="Protein Rev">
    <location>
        <begin position="1" status="less than"/>
        <end position="90"/>
    </location>
</feature>
<feature type="region of interest" description="Disordered" evidence="2">
    <location>
        <begin position="1"/>
        <end position="24"/>
    </location>
</feature>
<feature type="region of interest" description="Disordered" evidence="2">
    <location>
        <begin position="64"/>
        <end position="90"/>
    </location>
</feature>
<feature type="short sequence motif" description="Nuclear localization signal and RNA-binding (RRE)" evidence="1">
    <location>
        <begin position="8"/>
        <end position="24"/>
    </location>
</feature>
<feature type="short sequence motif" description="Nuclear export signal and binding to XPO1" evidence="1">
    <location>
        <begin position="47"/>
        <end position="58"/>
    </location>
</feature>
<feature type="compositionally biased region" description="Basic residues" evidence="2">
    <location>
        <begin position="10"/>
        <end position="24"/>
    </location>
</feature>
<feature type="compositionally biased region" description="Polar residues" evidence="2">
    <location>
        <begin position="64"/>
        <end position="78"/>
    </location>
</feature>
<feature type="modified residue" description="Phosphoserine; by host" evidence="1">
    <location>
        <position position="66"/>
    </location>
</feature>
<feature type="modified residue" description="Phosphoserine; by host" evidence="1">
    <location>
        <position position="73"/>
    </location>
</feature>
<feature type="non-terminal residue">
    <location>
        <position position="1"/>
    </location>
</feature>
<accession>P05869</accession>
<reference key="1">
    <citation type="journal article" date="1988" name="AIDS Res. Hum. Retroviruses">
        <title>Nucleotide sequence analysis of the env gene of a new Zairian isolate of HIV-1.</title>
        <authorList>
            <person name="Yourno J."/>
            <person name="Josephs S.F."/>
            <person name="Reitz M.S. Jr."/>
            <person name="Zagury D."/>
            <person name="Wong-Staal F."/>
            <person name="Gallo R.C."/>
        </authorList>
    </citation>
    <scope>NUCLEOTIDE SEQUENCE [GENOMIC RNA]</scope>
</reference>
<reference key="2">
    <citation type="journal article" date="1999" name="Arch. Biochem. Biophys.">
        <title>The ins and outs of HIV Rev.</title>
        <authorList>
            <person name="Hope T.J."/>
        </authorList>
    </citation>
    <scope>REVIEW</scope>
</reference>